<keyword id="KW-0030">Aminoacyl-tRNA synthetase</keyword>
<keyword id="KW-0067">ATP-binding</keyword>
<keyword id="KW-0963">Cytoplasm</keyword>
<keyword id="KW-0436">Ligase</keyword>
<keyword id="KW-0547">Nucleotide-binding</keyword>
<keyword id="KW-0648">Protein biosynthesis</keyword>
<protein>
    <recommendedName>
        <fullName evidence="1">Proline--tRNA ligase</fullName>
        <ecNumber evidence="1">6.1.1.15</ecNumber>
    </recommendedName>
    <alternativeName>
        <fullName evidence="1">Prolyl-tRNA synthetase</fullName>
        <shortName evidence="1">ProRS</shortName>
    </alternativeName>
</protein>
<accession>A4VXT8</accession>
<sequence>MKQSKMIIPTLREMPSDASVISHALMLRAGYVRQISAGIYSYLPLANRVIEKAKNIMREEFDKIDAIEFLAPALLSADIWRESGRYETYGDDLYKLKNREGSDFILGPTHEETVTLLARDAVQSYKQLPLNIYQIQPKYRDEKRPRNGLLRGREFIMKDGYSFHASYESLDQTYDDYKAAYEAIFTRAGLEFKAIIGDGGAMGGKDSQEFMAITPDRTDLDRWVVLDKSVASFEEIPEDVLEAFKAELLAWSVSGEDTIAYSSESGYAANLEMATSEYKPSTAVVVEEDLVKVATPDAKTIDEVAAFLNVAEEQTIKTMLFMADGEPVVALLVGNDQVNDVKLKNHLAADFFDVASPADAEKVFGAGFGSLGPVGLPENIKIIADRKVQDVKNAVVGANEDGFHYTGANAGRDFQVTEYVDIREVKEGEPSPDGHGVLNFARGIEIGHIFKLGTRYSDSMNANILDENGRSMPIIMGCYGIGVSRLLSAVLEQHARLFVNKTPKGEYRYAWGINFPKELAPFDVHLIPVNVKDEAAMELTQSIEASLVGAGYEVLTDDRNERVGVKFSDSDLIGLPIRVTVGKKAADGIVEVKIKGTGDTVEVHVDQLLETLQILTKENE</sequence>
<organism>
    <name type="scientific">Streptococcus suis (strain 05ZYH33)</name>
    <dbReference type="NCBI Taxonomy" id="391295"/>
    <lineage>
        <taxon>Bacteria</taxon>
        <taxon>Bacillati</taxon>
        <taxon>Bacillota</taxon>
        <taxon>Bacilli</taxon>
        <taxon>Lactobacillales</taxon>
        <taxon>Streptococcaceae</taxon>
        <taxon>Streptococcus</taxon>
    </lineage>
</organism>
<evidence type="ECO:0000255" key="1">
    <source>
        <dbReference type="HAMAP-Rule" id="MF_01569"/>
    </source>
</evidence>
<proteinExistence type="inferred from homology"/>
<name>SYP_STRSY</name>
<reference key="1">
    <citation type="journal article" date="2007" name="PLoS ONE">
        <title>A glimpse of streptococcal toxic shock syndrome from comparative genomics of S. suis 2 Chinese isolates.</title>
        <authorList>
            <person name="Chen C."/>
            <person name="Tang J."/>
            <person name="Dong W."/>
            <person name="Wang C."/>
            <person name="Feng Y."/>
            <person name="Wang J."/>
            <person name="Zheng F."/>
            <person name="Pan X."/>
            <person name="Liu D."/>
            <person name="Li M."/>
            <person name="Song Y."/>
            <person name="Zhu X."/>
            <person name="Sun H."/>
            <person name="Feng T."/>
            <person name="Guo Z."/>
            <person name="Ju A."/>
            <person name="Ge J."/>
            <person name="Dong Y."/>
            <person name="Sun W."/>
            <person name="Jiang Y."/>
            <person name="Wang J."/>
            <person name="Yan J."/>
            <person name="Yang H."/>
            <person name="Wang X."/>
            <person name="Gao G.F."/>
            <person name="Yang R."/>
            <person name="Wang J."/>
            <person name="Yu J."/>
        </authorList>
    </citation>
    <scope>NUCLEOTIDE SEQUENCE [LARGE SCALE GENOMIC DNA]</scope>
    <source>
        <strain>05ZYH33</strain>
    </source>
</reference>
<feature type="chain" id="PRO_1000069165" description="Proline--tRNA ligase">
    <location>
        <begin position="1"/>
        <end position="620"/>
    </location>
</feature>
<dbReference type="EC" id="6.1.1.15" evidence="1"/>
<dbReference type="EMBL" id="CP000407">
    <property type="protein sequence ID" value="ABP90927.1"/>
    <property type="molecule type" value="Genomic_DNA"/>
</dbReference>
<dbReference type="SMR" id="A4VXT8"/>
<dbReference type="STRING" id="391295.SSU05_1961"/>
<dbReference type="KEGG" id="ssu:SSU05_1961"/>
<dbReference type="eggNOG" id="COG0442">
    <property type="taxonomic scope" value="Bacteria"/>
</dbReference>
<dbReference type="HOGENOM" id="CLU_016739_0_0_9"/>
<dbReference type="GO" id="GO:0005829">
    <property type="term" value="C:cytosol"/>
    <property type="evidence" value="ECO:0007669"/>
    <property type="project" value="TreeGrafter"/>
</dbReference>
<dbReference type="GO" id="GO:0002161">
    <property type="term" value="F:aminoacyl-tRNA deacylase activity"/>
    <property type="evidence" value="ECO:0007669"/>
    <property type="project" value="InterPro"/>
</dbReference>
<dbReference type="GO" id="GO:0005524">
    <property type="term" value="F:ATP binding"/>
    <property type="evidence" value="ECO:0007669"/>
    <property type="project" value="UniProtKB-UniRule"/>
</dbReference>
<dbReference type="GO" id="GO:0140096">
    <property type="term" value="F:catalytic activity, acting on a protein"/>
    <property type="evidence" value="ECO:0007669"/>
    <property type="project" value="UniProtKB-ARBA"/>
</dbReference>
<dbReference type="GO" id="GO:0004827">
    <property type="term" value="F:proline-tRNA ligase activity"/>
    <property type="evidence" value="ECO:0007669"/>
    <property type="project" value="UniProtKB-UniRule"/>
</dbReference>
<dbReference type="GO" id="GO:0016740">
    <property type="term" value="F:transferase activity"/>
    <property type="evidence" value="ECO:0007669"/>
    <property type="project" value="UniProtKB-ARBA"/>
</dbReference>
<dbReference type="GO" id="GO:0006433">
    <property type="term" value="P:prolyl-tRNA aminoacylation"/>
    <property type="evidence" value="ECO:0007669"/>
    <property type="project" value="UniProtKB-UniRule"/>
</dbReference>
<dbReference type="CDD" id="cd04334">
    <property type="entry name" value="ProRS-INS"/>
    <property type="match status" value="1"/>
</dbReference>
<dbReference type="CDD" id="cd00861">
    <property type="entry name" value="ProRS_anticodon_short"/>
    <property type="match status" value="1"/>
</dbReference>
<dbReference type="CDD" id="cd00779">
    <property type="entry name" value="ProRS_core_prok"/>
    <property type="match status" value="1"/>
</dbReference>
<dbReference type="FunFam" id="3.40.50.800:FF:000011">
    <property type="entry name" value="Proline--tRNA ligase"/>
    <property type="match status" value="1"/>
</dbReference>
<dbReference type="Gene3D" id="3.40.50.800">
    <property type="entry name" value="Anticodon-binding domain"/>
    <property type="match status" value="1"/>
</dbReference>
<dbReference type="Gene3D" id="3.30.930.10">
    <property type="entry name" value="Bira Bifunctional Protein, Domain 2"/>
    <property type="match status" value="2"/>
</dbReference>
<dbReference type="Gene3D" id="3.90.960.10">
    <property type="entry name" value="YbaK/aminoacyl-tRNA synthetase-associated domain"/>
    <property type="match status" value="1"/>
</dbReference>
<dbReference type="HAMAP" id="MF_01569">
    <property type="entry name" value="Pro_tRNA_synth_type1"/>
    <property type="match status" value="1"/>
</dbReference>
<dbReference type="InterPro" id="IPR002314">
    <property type="entry name" value="aa-tRNA-synt_IIb"/>
</dbReference>
<dbReference type="InterPro" id="IPR006195">
    <property type="entry name" value="aa-tRNA-synth_II"/>
</dbReference>
<dbReference type="InterPro" id="IPR045864">
    <property type="entry name" value="aa-tRNA-synth_II/BPL/LPL"/>
</dbReference>
<dbReference type="InterPro" id="IPR004154">
    <property type="entry name" value="Anticodon-bd"/>
</dbReference>
<dbReference type="InterPro" id="IPR036621">
    <property type="entry name" value="Anticodon-bd_dom_sf"/>
</dbReference>
<dbReference type="InterPro" id="IPR002316">
    <property type="entry name" value="Pro-tRNA-ligase_IIa"/>
</dbReference>
<dbReference type="InterPro" id="IPR004500">
    <property type="entry name" value="Pro-tRNA-synth_IIa_bac-type"/>
</dbReference>
<dbReference type="InterPro" id="IPR023717">
    <property type="entry name" value="Pro-tRNA-Synthase_IIa_type1"/>
</dbReference>
<dbReference type="InterPro" id="IPR050062">
    <property type="entry name" value="Pro-tRNA_synthetase"/>
</dbReference>
<dbReference type="InterPro" id="IPR044140">
    <property type="entry name" value="ProRS_anticodon_short"/>
</dbReference>
<dbReference type="InterPro" id="IPR033730">
    <property type="entry name" value="ProRS_core_prok"/>
</dbReference>
<dbReference type="InterPro" id="IPR036754">
    <property type="entry name" value="YbaK/aa-tRNA-synt-asso_dom_sf"/>
</dbReference>
<dbReference type="InterPro" id="IPR007214">
    <property type="entry name" value="YbaK/aa-tRNA-synth-assoc-dom"/>
</dbReference>
<dbReference type="NCBIfam" id="NF006625">
    <property type="entry name" value="PRK09194.1"/>
    <property type="match status" value="1"/>
</dbReference>
<dbReference type="NCBIfam" id="TIGR00409">
    <property type="entry name" value="proS_fam_II"/>
    <property type="match status" value="2"/>
</dbReference>
<dbReference type="PANTHER" id="PTHR42753">
    <property type="entry name" value="MITOCHONDRIAL RIBOSOME PROTEIN L39/PROLYL-TRNA LIGASE FAMILY MEMBER"/>
    <property type="match status" value="1"/>
</dbReference>
<dbReference type="PANTHER" id="PTHR42753:SF2">
    <property type="entry name" value="PROLINE--TRNA LIGASE"/>
    <property type="match status" value="1"/>
</dbReference>
<dbReference type="Pfam" id="PF03129">
    <property type="entry name" value="HGTP_anticodon"/>
    <property type="match status" value="1"/>
</dbReference>
<dbReference type="Pfam" id="PF00587">
    <property type="entry name" value="tRNA-synt_2b"/>
    <property type="match status" value="1"/>
</dbReference>
<dbReference type="Pfam" id="PF04073">
    <property type="entry name" value="tRNA_edit"/>
    <property type="match status" value="1"/>
</dbReference>
<dbReference type="PRINTS" id="PR01046">
    <property type="entry name" value="TRNASYNTHPRO"/>
</dbReference>
<dbReference type="SUPFAM" id="SSF52954">
    <property type="entry name" value="Class II aaRS ABD-related"/>
    <property type="match status" value="1"/>
</dbReference>
<dbReference type="SUPFAM" id="SSF55681">
    <property type="entry name" value="Class II aaRS and biotin synthetases"/>
    <property type="match status" value="1"/>
</dbReference>
<dbReference type="SUPFAM" id="SSF55826">
    <property type="entry name" value="YbaK/ProRS associated domain"/>
    <property type="match status" value="1"/>
</dbReference>
<dbReference type="PROSITE" id="PS50862">
    <property type="entry name" value="AA_TRNA_LIGASE_II"/>
    <property type="match status" value="1"/>
</dbReference>
<gene>
    <name evidence="1" type="primary">proS</name>
    <name type="ordered locus">SSU05_1961</name>
</gene>
<comment type="function">
    <text evidence="1">Catalyzes the attachment of proline to tRNA(Pro) in a two-step reaction: proline is first activated by ATP to form Pro-AMP and then transferred to the acceptor end of tRNA(Pro). As ProRS can inadvertently accommodate and process non-cognate amino acids such as alanine and cysteine, to avoid such errors it has two additional distinct editing activities against alanine. One activity is designated as 'pretransfer' editing and involves the tRNA(Pro)-independent hydrolysis of activated Ala-AMP. The other activity is designated 'posttransfer' editing and involves deacylation of mischarged Ala-tRNA(Pro). The misacylated Cys-tRNA(Pro) is not edited by ProRS.</text>
</comment>
<comment type="catalytic activity">
    <reaction evidence="1">
        <text>tRNA(Pro) + L-proline + ATP = L-prolyl-tRNA(Pro) + AMP + diphosphate</text>
        <dbReference type="Rhea" id="RHEA:14305"/>
        <dbReference type="Rhea" id="RHEA-COMP:9700"/>
        <dbReference type="Rhea" id="RHEA-COMP:9702"/>
        <dbReference type="ChEBI" id="CHEBI:30616"/>
        <dbReference type="ChEBI" id="CHEBI:33019"/>
        <dbReference type="ChEBI" id="CHEBI:60039"/>
        <dbReference type="ChEBI" id="CHEBI:78442"/>
        <dbReference type="ChEBI" id="CHEBI:78532"/>
        <dbReference type="ChEBI" id="CHEBI:456215"/>
        <dbReference type="EC" id="6.1.1.15"/>
    </reaction>
</comment>
<comment type="subunit">
    <text evidence="1">Homodimer.</text>
</comment>
<comment type="subcellular location">
    <subcellularLocation>
        <location evidence="1">Cytoplasm</location>
    </subcellularLocation>
</comment>
<comment type="domain">
    <text evidence="1">Consists of three domains: the N-terminal catalytic domain, the editing domain and the C-terminal anticodon-binding domain.</text>
</comment>
<comment type="similarity">
    <text evidence="1">Belongs to the class-II aminoacyl-tRNA synthetase family. ProS type 1 subfamily.</text>
</comment>